<accession>A8G8D0</accession>
<keyword id="KW-0012">Acyltransferase</keyword>
<keyword id="KW-0963">Cytoplasm</keyword>
<keyword id="KW-0276">Fatty acid metabolism</keyword>
<keyword id="KW-0442">Lipid degradation</keyword>
<keyword id="KW-0443">Lipid metabolism</keyword>
<keyword id="KW-0808">Transferase</keyword>
<gene>
    <name evidence="1" type="primary">fadA</name>
    <name type="ordered locus">Spro_0260</name>
</gene>
<name>FADA_SERP5</name>
<sequence>MENVVIVDAVRTPMGRSKGGAFRQVRAEDLSAHLMRAVLSRNPSLDAAEIDDIYWGCVQQTLEQGFNIARNASLLAEIPHSVPAVTVNRLCGSSMQALHDAARAIMVGDAHVSLIGGVEHMGHVPMNHGVDFHPGLSRSVAKAAGMMGLTAEMLAKMHNISRQMQDEFAARSHQRAHAATLAGYFKNEIIPTTGHDADGVLTRYDFDEVIRPETTVASLAALRPAFDPVNGTVTAGTSSALSDGASAMLLMSESRAKALGLKARARIRSMAVVGCDPSIMGYGPVPASKLALKRAGLSVQDIDLFELNEAFAAQSLPCIKDLGLLDSIDDKINLNGGAIALGHPLGCSGSRISTTLLNNMERRDVQFGLATMCIGLGQGIATVFERV</sequence>
<evidence type="ECO:0000255" key="1">
    <source>
        <dbReference type="HAMAP-Rule" id="MF_01620"/>
    </source>
</evidence>
<comment type="function">
    <text evidence="1">Catalyzes the final step of fatty acid oxidation in which acetyl-CoA is released and the CoA ester of a fatty acid two carbons shorter is formed.</text>
</comment>
<comment type="catalytic activity">
    <reaction evidence="1">
        <text>an acyl-CoA + acetyl-CoA = a 3-oxoacyl-CoA + CoA</text>
        <dbReference type="Rhea" id="RHEA:21564"/>
        <dbReference type="ChEBI" id="CHEBI:57287"/>
        <dbReference type="ChEBI" id="CHEBI:57288"/>
        <dbReference type="ChEBI" id="CHEBI:58342"/>
        <dbReference type="ChEBI" id="CHEBI:90726"/>
        <dbReference type="EC" id="2.3.1.16"/>
    </reaction>
</comment>
<comment type="pathway">
    <text evidence="1">Lipid metabolism; fatty acid beta-oxidation.</text>
</comment>
<comment type="subunit">
    <text evidence="1">Heterotetramer of two alpha chains (FadB) and two beta chains (FadA).</text>
</comment>
<comment type="subcellular location">
    <subcellularLocation>
        <location evidence="1">Cytoplasm</location>
    </subcellularLocation>
</comment>
<comment type="similarity">
    <text evidence="1">Belongs to the thiolase-like superfamily. Thiolase family.</text>
</comment>
<dbReference type="EC" id="2.3.1.16" evidence="1"/>
<dbReference type="EMBL" id="CP000826">
    <property type="protein sequence ID" value="ABV39370.1"/>
    <property type="molecule type" value="Genomic_DNA"/>
</dbReference>
<dbReference type="SMR" id="A8G8D0"/>
<dbReference type="STRING" id="399741.Spro_0260"/>
<dbReference type="KEGG" id="spe:Spro_0260"/>
<dbReference type="eggNOG" id="COG0183">
    <property type="taxonomic scope" value="Bacteria"/>
</dbReference>
<dbReference type="HOGENOM" id="CLU_031026_2_3_6"/>
<dbReference type="OrthoDB" id="9764638at2"/>
<dbReference type="UniPathway" id="UPA00659"/>
<dbReference type="GO" id="GO:0005737">
    <property type="term" value="C:cytoplasm"/>
    <property type="evidence" value="ECO:0007669"/>
    <property type="project" value="UniProtKB-SubCell"/>
</dbReference>
<dbReference type="GO" id="GO:0003988">
    <property type="term" value="F:acetyl-CoA C-acyltransferase activity"/>
    <property type="evidence" value="ECO:0007669"/>
    <property type="project" value="UniProtKB-UniRule"/>
</dbReference>
<dbReference type="GO" id="GO:0006635">
    <property type="term" value="P:fatty acid beta-oxidation"/>
    <property type="evidence" value="ECO:0007669"/>
    <property type="project" value="UniProtKB-UniRule"/>
</dbReference>
<dbReference type="GO" id="GO:0010124">
    <property type="term" value="P:phenylacetate catabolic process"/>
    <property type="evidence" value="ECO:0007669"/>
    <property type="project" value="TreeGrafter"/>
</dbReference>
<dbReference type="CDD" id="cd00751">
    <property type="entry name" value="thiolase"/>
    <property type="match status" value="1"/>
</dbReference>
<dbReference type="FunFam" id="3.40.47.10:FF:000010">
    <property type="entry name" value="Acetyl-CoA acetyltransferase (Thiolase)"/>
    <property type="match status" value="1"/>
</dbReference>
<dbReference type="Gene3D" id="3.40.47.10">
    <property type="match status" value="2"/>
</dbReference>
<dbReference type="HAMAP" id="MF_01620">
    <property type="entry name" value="FadA"/>
    <property type="match status" value="1"/>
</dbReference>
<dbReference type="InterPro" id="IPR012805">
    <property type="entry name" value="FadA"/>
</dbReference>
<dbReference type="InterPro" id="IPR002155">
    <property type="entry name" value="Thiolase"/>
</dbReference>
<dbReference type="InterPro" id="IPR016039">
    <property type="entry name" value="Thiolase-like"/>
</dbReference>
<dbReference type="InterPro" id="IPR050215">
    <property type="entry name" value="Thiolase-like_sf_Thiolase"/>
</dbReference>
<dbReference type="InterPro" id="IPR020615">
    <property type="entry name" value="Thiolase_acyl_enz_int_AS"/>
</dbReference>
<dbReference type="InterPro" id="IPR020610">
    <property type="entry name" value="Thiolase_AS"/>
</dbReference>
<dbReference type="InterPro" id="IPR020617">
    <property type="entry name" value="Thiolase_C"/>
</dbReference>
<dbReference type="InterPro" id="IPR020613">
    <property type="entry name" value="Thiolase_CS"/>
</dbReference>
<dbReference type="InterPro" id="IPR020616">
    <property type="entry name" value="Thiolase_N"/>
</dbReference>
<dbReference type="NCBIfam" id="TIGR01930">
    <property type="entry name" value="AcCoA-C-Actrans"/>
    <property type="match status" value="1"/>
</dbReference>
<dbReference type="NCBIfam" id="TIGR02445">
    <property type="entry name" value="fadA"/>
    <property type="match status" value="1"/>
</dbReference>
<dbReference type="NCBIfam" id="NF006510">
    <property type="entry name" value="PRK08947.1"/>
    <property type="match status" value="1"/>
</dbReference>
<dbReference type="PANTHER" id="PTHR43853:SF11">
    <property type="entry name" value="3-KETOACYL-COA THIOLASE FADA"/>
    <property type="match status" value="1"/>
</dbReference>
<dbReference type="PANTHER" id="PTHR43853">
    <property type="entry name" value="3-KETOACYL-COA THIOLASE, PEROXISOMAL"/>
    <property type="match status" value="1"/>
</dbReference>
<dbReference type="Pfam" id="PF02803">
    <property type="entry name" value="Thiolase_C"/>
    <property type="match status" value="1"/>
</dbReference>
<dbReference type="Pfam" id="PF00108">
    <property type="entry name" value="Thiolase_N"/>
    <property type="match status" value="1"/>
</dbReference>
<dbReference type="PIRSF" id="PIRSF000429">
    <property type="entry name" value="Ac-CoA_Ac_transf"/>
    <property type="match status" value="1"/>
</dbReference>
<dbReference type="SUPFAM" id="SSF53901">
    <property type="entry name" value="Thiolase-like"/>
    <property type="match status" value="2"/>
</dbReference>
<dbReference type="PROSITE" id="PS00098">
    <property type="entry name" value="THIOLASE_1"/>
    <property type="match status" value="1"/>
</dbReference>
<dbReference type="PROSITE" id="PS00737">
    <property type="entry name" value="THIOLASE_2"/>
    <property type="match status" value="1"/>
</dbReference>
<dbReference type="PROSITE" id="PS00099">
    <property type="entry name" value="THIOLASE_3"/>
    <property type="match status" value="1"/>
</dbReference>
<organism>
    <name type="scientific">Serratia proteamaculans (strain 568)</name>
    <dbReference type="NCBI Taxonomy" id="399741"/>
    <lineage>
        <taxon>Bacteria</taxon>
        <taxon>Pseudomonadati</taxon>
        <taxon>Pseudomonadota</taxon>
        <taxon>Gammaproteobacteria</taxon>
        <taxon>Enterobacterales</taxon>
        <taxon>Yersiniaceae</taxon>
        <taxon>Serratia</taxon>
    </lineage>
</organism>
<reference key="1">
    <citation type="submission" date="2007-09" db="EMBL/GenBank/DDBJ databases">
        <title>Complete sequence of chromosome of Serratia proteamaculans 568.</title>
        <authorList>
            <consortium name="US DOE Joint Genome Institute"/>
            <person name="Copeland A."/>
            <person name="Lucas S."/>
            <person name="Lapidus A."/>
            <person name="Barry K."/>
            <person name="Glavina del Rio T."/>
            <person name="Dalin E."/>
            <person name="Tice H."/>
            <person name="Pitluck S."/>
            <person name="Chain P."/>
            <person name="Malfatti S."/>
            <person name="Shin M."/>
            <person name="Vergez L."/>
            <person name="Schmutz J."/>
            <person name="Larimer F."/>
            <person name="Land M."/>
            <person name="Hauser L."/>
            <person name="Kyrpides N."/>
            <person name="Kim E."/>
            <person name="Taghavi S."/>
            <person name="Newman L."/>
            <person name="Vangronsveld J."/>
            <person name="van der Lelie D."/>
            <person name="Richardson P."/>
        </authorList>
    </citation>
    <scope>NUCLEOTIDE SEQUENCE [LARGE SCALE GENOMIC DNA]</scope>
    <source>
        <strain>568</strain>
    </source>
</reference>
<protein>
    <recommendedName>
        <fullName evidence="1">3-ketoacyl-CoA thiolase</fullName>
        <ecNumber evidence="1">2.3.1.16</ecNumber>
    </recommendedName>
    <alternativeName>
        <fullName evidence="1">Acetyl-CoA acyltransferase</fullName>
    </alternativeName>
    <alternativeName>
        <fullName evidence="1">Beta-ketothiolase</fullName>
    </alternativeName>
    <alternativeName>
        <fullName evidence="1">Fatty acid oxidation complex subunit beta</fullName>
    </alternativeName>
</protein>
<proteinExistence type="inferred from homology"/>
<feature type="chain" id="PRO_0000323552" description="3-ketoacyl-CoA thiolase">
    <location>
        <begin position="1"/>
        <end position="387"/>
    </location>
</feature>
<feature type="active site" description="Acyl-thioester intermediate" evidence="1">
    <location>
        <position position="91"/>
    </location>
</feature>
<feature type="active site" description="Proton acceptor" evidence="1">
    <location>
        <position position="343"/>
    </location>
</feature>
<feature type="active site" description="Proton acceptor" evidence="1">
    <location>
        <position position="373"/>
    </location>
</feature>